<reference key="1">
    <citation type="submission" date="2007-03" db="EMBL/GenBank/DDBJ databases">
        <title>Complete sequence of chromosome of Methanococcus maripaludis C5.</title>
        <authorList>
            <consortium name="US DOE Joint Genome Institute"/>
            <person name="Copeland A."/>
            <person name="Lucas S."/>
            <person name="Lapidus A."/>
            <person name="Barry K."/>
            <person name="Glavina del Rio T."/>
            <person name="Dalin E."/>
            <person name="Tice H."/>
            <person name="Pitluck S."/>
            <person name="Chertkov O."/>
            <person name="Brettin T."/>
            <person name="Bruce D."/>
            <person name="Han C."/>
            <person name="Detter J.C."/>
            <person name="Schmutz J."/>
            <person name="Larimer F."/>
            <person name="Land M."/>
            <person name="Hauser L."/>
            <person name="Kyrpides N."/>
            <person name="Mikhailova N."/>
            <person name="Sieprawska-Lupa M."/>
            <person name="Whitman W.B."/>
            <person name="Richardson P."/>
        </authorList>
    </citation>
    <scope>NUCLEOTIDE SEQUENCE [LARGE SCALE GENOMIC DNA]</scope>
    <source>
        <strain>C5 / ATCC BAA-1333</strain>
    </source>
</reference>
<feature type="chain" id="PRO_0000322433" description="Chorismate synthase">
    <location>
        <begin position="1"/>
        <end position="373"/>
    </location>
</feature>
<feature type="binding site" evidence="1">
    <location>
        <position position="46"/>
    </location>
    <ligand>
        <name>NADP(+)</name>
        <dbReference type="ChEBI" id="CHEBI:58349"/>
    </ligand>
</feature>
<feature type="binding site" evidence="1">
    <location>
        <begin position="123"/>
        <end position="125"/>
    </location>
    <ligand>
        <name>FMN</name>
        <dbReference type="ChEBI" id="CHEBI:58210"/>
    </ligand>
</feature>
<feature type="binding site" evidence="1">
    <location>
        <begin position="251"/>
        <end position="252"/>
    </location>
    <ligand>
        <name>FMN</name>
        <dbReference type="ChEBI" id="CHEBI:58210"/>
    </ligand>
</feature>
<feature type="binding site" evidence="1">
    <location>
        <position position="295"/>
    </location>
    <ligand>
        <name>FMN</name>
        <dbReference type="ChEBI" id="CHEBI:58210"/>
    </ligand>
</feature>
<feature type="binding site" evidence="1">
    <location>
        <begin position="310"/>
        <end position="314"/>
    </location>
    <ligand>
        <name>FMN</name>
        <dbReference type="ChEBI" id="CHEBI:58210"/>
    </ligand>
</feature>
<feature type="binding site" evidence="1">
    <location>
        <position position="337"/>
    </location>
    <ligand>
        <name>FMN</name>
        <dbReference type="ChEBI" id="CHEBI:58210"/>
    </ligand>
</feature>
<name>AROC_METM5</name>
<evidence type="ECO:0000255" key="1">
    <source>
        <dbReference type="HAMAP-Rule" id="MF_00300"/>
    </source>
</evidence>
<organism>
    <name type="scientific">Methanococcus maripaludis (strain C5 / ATCC BAA-1333)</name>
    <dbReference type="NCBI Taxonomy" id="402880"/>
    <lineage>
        <taxon>Archaea</taxon>
        <taxon>Methanobacteriati</taxon>
        <taxon>Methanobacteriota</taxon>
        <taxon>Methanomada group</taxon>
        <taxon>Methanococci</taxon>
        <taxon>Methanococcales</taxon>
        <taxon>Methanococcaceae</taxon>
        <taxon>Methanococcus</taxon>
    </lineage>
</organism>
<accession>A4FWK1</accession>
<protein>
    <recommendedName>
        <fullName evidence="1">Chorismate synthase</fullName>
        <shortName evidence="1">CS</shortName>
        <ecNumber evidence="1">4.2.3.5</ecNumber>
    </recommendedName>
    <alternativeName>
        <fullName evidence="1">5-enolpyruvylshikimate-3-phosphate phospholyase</fullName>
    </alternativeName>
</protein>
<gene>
    <name evidence="1" type="primary">aroC</name>
    <name type="ordered locus">MmarC5_0260</name>
</gene>
<keyword id="KW-0028">Amino-acid biosynthesis</keyword>
<keyword id="KW-0057">Aromatic amino acid biosynthesis</keyword>
<keyword id="KW-0274">FAD</keyword>
<keyword id="KW-0285">Flavoprotein</keyword>
<keyword id="KW-0288">FMN</keyword>
<keyword id="KW-0456">Lyase</keyword>
<keyword id="KW-0521">NADP</keyword>
<comment type="function">
    <text evidence="1">Catalyzes the anti-1,4-elimination of the C-3 phosphate and the C-6 proR hydrogen from 5-enolpyruvylshikimate-3-phosphate (EPSP) to yield chorismate, which is the branch point compound that serves as the starting substrate for the three terminal pathways of aromatic amino acid biosynthesis. This reaction introduces a second double bond into the aromatic ring system.</text>
</comment>
<comment type="catalytic activity">
    <reaction evidence="1">
        <text>5-O-(1-carboxyvinyl)-3-phosphoshikimate = chorismate + phosphate</text>
        <dbReference type="Rhea" id="RHEA:21020"/>
        <dbReference type="ChEBI" id="CHEBI:29748"/>
        <dbReference type="ChEBI" id="CHEBI:43474"/>
        <dbReference type="ChEBI" id="CHEBI:57701"/>
        <dbReference type="EC" id="4.2.3.5"/>
    </reaction>
</comment>
<comment type="cofactor">
    <cofactor evidence="1">
        <name>FMNH2</name>
        <dbReference type="ChEBI" id="CHEBI:57618"/>
    </cofactor>
    <text evidence="1">Reduced FMN (FMNH(2)).</text>
</comment>
<comment type="pathway">
    <text evidence="1">Metabolic intermediate biosynthesis; chorismate biosynthesis; chorismate from D-erythrose 4-phosphate and phosphoenolpyruvate: step 7/7.</text>
</comment>
<comment type="similarity">
    <text evidence="1">Belongs to the chorismate synthase family.</text>
</comment>
<dbReference type="EC" id="4.2.3.5" evidence="1"/>
<dbReference type="EMBL" id="CP000609">
    <property type="protein sequence ID" value="ABO34576.1"/>
    <property type="molecule type" value="Genomic_DNA"/>
</dbReference>
<dbReference type="RefSeq" id="WP_011868033.1">
    <property type="nucleotide sequence ID" value="NC_009135.1"/>
</dbReference>
<dbReference type="SMR" id="A4FWK1"/>
<dbReference type="STRING" id="402880.MmarC5_0260"/>
<dbReference type="GeneID" id="4928323"/>
<dbReference type="KEGG" id="mmq:MmarC5_0260"/>
<dbReference type="eggNOG" id="arCOG04133">
    <property type="taxonomic scope" value="Archaea"/>
</dbReference>
<dbReference type="HOGENOM" id="CLU_034547_0_2_2"/>
<dbReference type="OrthoDB" id="33049at2157"/>
<dbReference type="UniPathway" id="UPA00053">
    <property type="reaction ID" value="UER00090"/>
</dbReference>
<dbReference type="Proteomes" id="UP000000253">
    <property type="component" value="Chromosome"/>
</dbReference>
<dbReference type="GO" id="GO:0005829">
    <property type="term" value="C:cytosol"/>
    <property type="evidence" value="ECO:0007669"/>
    <property type="project" value="TreeGrafter"/>
</dbReference>
<dbReference type="GO" id="GO:0004107">
    <property type="term" value="F:chorismate synthase activity"/>
    <property type="evidence" value="ECO:0007669"/>
    <property type="project" value="UniProtKB-UniRule"/>
</dbReference>
<dbReference type="GO" id="GO:0010181">
    <property type="term" value="F:FMN binding"/>
    <property type="evidence" value="ECO:0007669"/>
    <property type="project" value="TreeGrafter"/>
</dbReference>
<dbReference type="GO" id="GO:0008652">
    <property type="term" value="P:amino acid biosynthetic process"/>
    <property type="evidence" value="ECO:0007669"/>
    <property type="project" value="UniProtKB-KW"/>
</dbReference>
<dbReference type="GO" id="GO:0009073">
    <property type="term" value="P:aromatic amino acid family biosynthetic process"/>
    <property type="evidence" value="ECO:0007669"/>
    <property type="project" value="UniProtKB-KW"/>
</dbReference>
<dbReference type="GO" id="GO:0009423">
    <property type="term" value="P:chorismate biosynthetic process"/>
    <property type="evidence" value="ECO:0007669"/>
    <property type="project" value="UniProtKB-UniRule"/>
</dbReference>
<dbReference type="CDD" id="cd07304">
    <property type="entry name" value="Chorismate_synthase"/>
    <property type="match status" value="1"/>
</dbReference>
<dbReference type="Gene3D" id="3.60.150.10">
    <property type="entry name" value="Chorismate synthase AroC"/>
    <property type="match status" value="1"/>
</dbReference>
<dbReference type="HAMAP" id="MF_00300">
    <property type="entry name" value="Chorismate_synth"/>
    <property type="match status" value="1"/>
</dbReference>
<dbReference type="InterPro" id="IPR000453">
    <property type="entry name" value="Chorismate_synth"/>
</dbReference>
<dbReference type="InterPro" id="IPR035904">
    <property type="entry name" value="Chorismate_synth_AroC_sf"/>
</dbReference>
<dbReference type="InterPro" id="IPR020541">
    <property type="entry name" value="Chorismate_synthase_CS"/>
</dbReference>
<dbReference type="NCBIfam" id="TIGR00033">
    <property type="entry name" value="aroC"/>
    <property type="match status" value="1"/>
</dbReference>
<dbReference type="NCBIfam" id="NF003793">
    <property type="entry name" value="PRK05382.1"/>
    <property type="match status" value="1"/>
</dbReference>
<dbReference type="PANTHER" id="PTHR21085">
    <property type="entry name" value="CHORISMATE SYNTHASE"/>
    <property type="match status" value="1"/>
</dbReference>
<dbReference type="PANTHER" id="PTHR21085:SF0">
    <property type="entry name" value="CHORISMATE SYNTHASE"/>
    <property type="match status" value="1"/>
</dbReference>
<dbReference type="Pfam" id="PF01264">
    <property type="entry name" value="Chorismate_synt"/>
    <property type="match status" value="1"/>
</dbReference>
<dbReference type="PIRSF" id="PIRSF001456">
    <property type="entry name" value="Chorismate_synth"/>
    <property type="match status" value="1"/>
</dbReference>
<dbReference type="SUPFAM" id="SSF103263">
    <property type="entry name" value="Chorismate synthase, AroC"/>
    <property type="match status" value="1"/>
</dbReference>
<dbReference type="PROSITE" id="PS00787">
    <property type="entry name" value="CHORISMATE_SYNTHASE_1"/>
    <property type="match status" value="1"/>
</dbReference>
<dbReference type="PROSITE" id="PS00788">
    <property type="entry name" value="CHORISMATE_SYNTHASE_2"/>
    <property type="match status" value="1"/>
</dbReference>
<proteinExistence type="inferred from homology"/>
<sequence>MNTFGDNFRVTTWGESHGKALGAVIDGCPSNLPISEEDIQNELNRRRPGYSIFSTPRKEEDKLEILSGIFEGKTTGTPISGLVFNKGQKSKDYSKIKNTPRPGHADLNYFLKYGNYDYRGGGRSSGRTTIGNVIGGAVAKKLIEFTHNIKIIGYSTKIGKINGDFDYYKNPEFFESNSNIEKLFEKIENNPLRCPSKNSDEMKDYVLDAMDKQDSVGGIIEIIIKGIPQGVGNPVFNKLEGKLGSAFIGINAVKGFEIGRGFESSELYGSEMNDSYYMNKDSIKGKTNNTGGIIGGISTGSPVVLRVSIKPTPSISKIQESVNLISNENEKIEIGGRHDPIIVPRVIPVLESMAAITVADLMISSGYIDPCRI</sequence>